<reference key="1">
    <citation type="submission" date="2007-05" db="EMBL/GenBank/DDBJ databases">
        <title>Complete sequence of chromosome of Staphylococcus aureus subsp. aureus JH9.</title>
        <authorList>
            <consortium name="US DOE Joint Genome Institute"/>
            <person name="Copeland A."/>
            <person name="Lucas S."/>
            <person name="Lapidus A."/>
            <person name="Barry K."/>
            <person name="Detter J.C."/>
            <person name="Glavina del Rio T."/>
            <person name="Hammon N."/>
            <person name="Israni S."/>
            <person name="Pitluck S."/>
            <person name="Chain P."/>
            <person name="Malfatti S."/>
            <person name="Shin M."/>
            <person name="Vergez L."/>
            <person name="Schmutz J."/>
            <person name="Larimer F."/>
            <person name="Land M."/>
            <person name="Hauser L."/>
            <person name="Kyrpides N."/>
            <person name="Kim E."/>
            <person name="Tomasz A."/>
            <person name="Richardson P."/>
        </authorList>
    </citation>
    <scope>NUCLEOTIDE SEQUENCE [LARGE SCALE GENOMIC DNA]</scope>
    <source>
        <strain>JH9</strain>
    </source>
</reference>
<sequence>MNIHEYQGKEIFRSMGVAVPEGRVAFTAEEAVEKAKELNSDVYVVKAQIHAGGRGKAGGVKIAKSLSEVETYAKELLGKTLVTHQTGPEGKEIKRLYIEEGCAIQKEYYVGFVIDRATDQVTLMASEEGGTEIEEVAAKTPEKIFKETIDPVIGLSPFQARRIAFNINIPKESVNKAAKFLLALYNVFIEKDCSIVEINPLVTTADGDVLALDAKINFDDNALFRHKDVVELRDLEEEDPKEIEASKHDLSYIALDGDIGCMVNGAGLAMATMDTINHFGGNPANFLDAGGSATREKVTEAFKIILGDENVKGIFVNIFGGIMKCDVIAEGIVEAVKEVDLTLPLVVRLEGTNVELGKKILKDSGLAIEPAATMAEGAQKIVKLVKEA</sequence>
<accession>A5ISD0</accession>
<proteinExistence type="inferred from homology"/>
<comment type="function">
    <text evidence="1">Succinyl-CoA synthetase functions in the citric acid cycle (TCA), coupling the hydrolysis of succinyl-CoA to the synthesis of either ATP or GTP and thus represents the only step of substrate-level phosphorylation in the TCA. The beta subunit provides nucleotide specificity of the enzyme and binds the substrate succinate, while the binding sites for coenzyme A and phosphate are found in the alpha subunit.</text>
</comment>
<comment type="catalytic activity">
    <reaction evidence="1">
        <text>succinate + ATP + CoA = succinyl-CoA + ADP + phosphate</text>
        <dbReference type="Rhea" id="RHEA:17661"/>
        <dbReference type="ChEBI" id="CHEBI:30031"/>
        <dbReference type="ChEBI" id="CHEBI:30616"/>
        <dbReference type="ChEBI" id="CHEBI:43474"/>
        <dbReference type="ChEBI" id="CHEBI:57287"/>
        <dbReference type="ChEBI" id="CHEBI:57292"/>
        <dbReference type="ChEBI" id="CHEBI:456216"/>
        <dbReference type="EC" id="6.2.1.5"/>
    </reaction>
    <physiologicalReaction direction="right-to-left" evidence="1">
        <dbReference type="Rhea" id="RHEA:17663"/>
    </physiologicalReaction>
</comment>
<comment type="catalytic activity">
    <reaction evidence="1">
        <text>GTP + succinate + CoA = succinyl-CoA + GDP + phosphate</text>
        <dbReference type="Rhea" id="RHEA:22120"/>
        <dbReference type="ChEBI" id="CHEBI:30031"/>
        <dbReference type="ChEBI" id="CHEBI:37565"/>
        <dbReference type="ChEBI" id="CHEBI:43474"/>
        <dbReference type="ChEBI" id="CHEBI:57287"/>
        <dbReference type="ChEBI" id="CHEBI:57292"/>
        <dbReference type="ChEBI" id="CHEBI:58189"/>
    </reaction>
    <physiologicalReaction direction="right-to-left" evidence="1">
        <dbReference type="Rhea" id="RHEA:22122"/>
    </physiologicalReaction>
</comment>
<comment type="cofactor">
    <cofactor evidence="1">
        <name>Mg(2+)</name>
        <dbReference type="ChEBI" id="CHEBI:18420"/>
    </cofactor>
    <text evidence="1">Binds 1 Mg(2+) ion per subunit.</text>
</comment>
<comment type="pathway">
    <text evidence="1">Carbohydrate metabolism; tricarboxylic acid cycle; succinate from succinyl-CoA (ligase route): step 1/1.</text>
</comment>
<comment type="subunit">
    <text evidence="1">Heterotetramer of two alpha and two beta subunits.</text>
</comment>
<comment type="similarity">
    <text evidence="1">Belongs to the succinate/malate CoA ligase beta subunit family.</text>
</comment>
<gene>
    <name evidence="1" type="primary">sucC</name>
    <name type="ordered locus">SaurJH9_1304</name>
</gene>
<name>SUCC_STAA9</name>
<evidence type="ECO:0000255" key="1">
    <source>
        <dbReference type="HAMAP-Rule" id="MF_00558"/>
    </source>
</evidence>
<dbReference type="EC" id="6.2.1.5" evidence="1"/>
<dbReference type="EMBL" id="CP000703">
    <property type="protein sequence ID" value="ABQ49103.1"/>
    <property type="molecule type" value="Genomic_DNA"/>
</dbReference>
<dbReference type="RefSeq" id="WP_001020801.1">
    <property type="nucleotide sequence ID" value="NC_009487.1"/>
</dbReference>
<dbReference type="SMR" id="A5ISD0"/>
<dbReference type="KEGG" id="saj:SaurJH9_1304"/>
<dbReference type="HOGENOM" id="CLU_037430_0_2_9"/>
<dbReference type="UniPathway" id="UPA00223">
    <property type="reaction ID" value="UER00999"/>
</dbReference>
<dbReference type="GO" id="GO:0005829">
    <property type="term" value="C:cytosol"/>
    <property type="evidence" value="ECO:0007669"/>
    <property type="project" value="TreeGrafter"/>
</dbReference>
<dbReference type="GO" id="GO:0042709">
    <property type="term" value="C:succinate-CoA ligase complex"/>
    <property type="evidence" value="ECO:0007669"/>
    <property type="project" value="TreeGrafter"/>
</dbReference>
<dbReference type="GO" id="GO:0005524">
    <property type="term" value="F:ATP binding"/>
    <property type="evidence" value="ECO:0007669"/>
    <property type="project" value="UniProtKB-UniRule"/>
</dbReference>
<dbReference type="GO" id="GO:0000287">
    <property type="term" value="F:magnesium ion binding"/>
    <property type="evidence" value="ECO:0007669"/>
    <property type="project" value="UniProtKB-UniRule"/>
</dbReference>
<dbReference type="GO" id="GO:0004775">
    <property type="term" value="F:succinate-CoA ligase (ADP-forming) activity"/>
    <property type="evidence" value="ECO:0007669"/>
    <property type="project" value="UniProtKB-UniRule"/>
</dbReference>
<dbReference type="GO" id="GO:0004776">
    <property type="term" value="F:succinate-CoA ligase (GDP-forming) activity"/>
    <property type="evidence" value="ECO:0007669"/>
    <property type="project" value="RHEA"/>
</dbReference>
<dbReference type="GO" id="GO:0006104">
    <property type="term" value="P:succinyl-CoA metabolic process"/>
    <property type="evidence" value="ECO:0007669"/>
    <property type="project" value="TreeGrafter"/>
</dbReference>
<dbReference type="GO" id="GO:0006099">
    <property type="term" value="P:tricarboxylic acid cycle"/>
    <property type="evidence" value="ECO:0007669"/>
    <property type="project" value="UniProtKB-UniRule"/>
</dbReference>
<dbReference type="FunFam" id="3.30.1490.20:FF:000002">
    <property type="entry name" value="Succinate--CoA ligase [ADP-forming] subunit beta"/>
    <property type="match status" value="1"/>
</dbReference>
<dbReference type="FunFam" id="3.30.470.20:FF:000002">
    <property type="entry name" value="Succinate--CoA ligase [ADP-forming] subunit beta"/>
    <property type="match status" value="1"/>
</dbReference>
<dbReference type="FunFam" id="3.40.50.261:FF:000001">
    <property type="entry name" value="Succinate--CoA ligase [ADP-forming] subunit beta"/>
    <property type="match status" value="1"/>
</dbReference>
<dbReference type="Gene3D" id="3.30.1490.20">
    <property type="entry name" value="ATP-grasp fold, A domain"/>
    <property type="match status" value="1"/>
</dbReference>
<dbReference type="Gene3D" id="3.30.470.20">
    <property type="entry name" value="ATP-grasp fold, B domain"/>
    <property type="match status" value="1"/>
</dbReference>
<dbReference type="Gene3D" id="3.40.50.261">
    <property type="entry name" value="Succinyl-CoA synthetase domains"/>
    <property type="match status" value="1"/>
</dbReference>
<dbReference type="HAMAP" id="MF_00558">
    <property type="entry name" value="Succ_CoA_beta"/>
    <property type="match status" value="1"/>
</dbReference>
<dbReference type="InterPro" id="IPR011761">
    <property type="entry name" value="ATP-grasp"/>
</dbReference>
<dbReference type="InterPro" id="IPR013650">
    <property type="entry name" value="ATP-grasp_succ-CoA_synth-type"/>
</dbReference>
<dbReference type="InterPro" id="IPR013815">
    <property type="entry name" value="ATP_grasp_subdomain_1"/>
</dbReference>
<dbReference type="InterPro" id="IPR017866">
    <property type="entry name" value="Succ-CoA_synthase_bsu_CS"/>
</dbReference>
<dbReference type="InterPro" id="IPR005811">
    <property type="entry name" value="SUCC_ACL_C"/>
</dbReference>
<dbReference type="InterPro" id="IPR005809">
    <property type="entry name" value="Succ_CoA_ligase-like_bsu"/>
</dbReference>
<dbReference type="InterPro" id="IPR016102">
    <property type="entry name" value="Succinyl-CoA_synth-like"/>
</dbReference>
<dbReference type="NCBIfam" id="NF001913">
    <property type="entry name" value="PRK00696.1"/>
    <property type="match status" value="1"/>
</dbReference>
<dbReference type="NCBIfam" id="TIGR01016">
    <property type="entry name" value="sucCoAbeta"/>
    <property type="match status" value="1"/>
</dbReference>
<dbReference type="PANTHER" id="PTHR11815:SF10">
    <property type="entry name" value="SUCCINATE--COA LIGASE [GDP-FORMING] SUBUNIT BETA, MITOCHONDRIAL"/>
    <property type="match status" value="1"/>
</dbReference>
<dbReference type="PANTHER" id="PTHR11815">
    <property type="entry name" value="SUCCINYL-COA SYNTHETASE BETA CHAIN"/>
    <property type="match status" value="1"/>
</dbReference>
<dbReference type="Pfam" id="PF08442">
    <property type="entry name" value="ATP-grasp_2"/>
    <property type="match status" value="1"/>
</dbReference>
<dbReference type="Pfam" id="PF00549">
    <property type="entry name" value="Ligase_CoA"/>
    <property type="match status" value="1"/>
</dbReference>
<dbReference type="PIRSF" id="PIRSF001554">
    <property type="entry name" value="SucCS_beta"/>
    <property type="match status" value="1"/>
</dbReference>
<dbReference type="SUPFAM" id="SSF56059">
    <property type="entry name" value="Glutathione synthetase ATP-binding domain-like"/>
    <property type="match status" value="1"/>
</dbReference>
<dbReference type="SUPFAM" id="SSF52210">
    <property type="entry name" value="Succinyl-CoA synthetase domains"/>
    <property type="match status" value="1"/>
</dbReference>
<dbReference type="PROSITE" id="PS50975">
    <property type="entry name" value="ATP_GRASP"/>
    <property type="match status" value="1"/>
</dbReference>
<dbReference type="PROSITE" id="PS01217">
    <property type="entry name" value="SUCCINYL_COA_LIG_3"/>
    <property type="match status" value="1"/>
</dbReference>
<keyword id="KW-0067">ATP-binding</keyword>
<keyword id="KW-0436">Ligase</keyword>
<keyword id="KW-0460">Magnesium</keyword>
<keyword id="KW-0479">Metal-binding</keyword>
<keyword id="KW-0547">Nucleotide-binding</keyword>
<keyword id="KW-0816">Tricarboxylic acid cycle</keyword>
<feature type="chain" id="PRO_1000082245" description="Succinate--CoA ligase [ADP-forming] subunit beta">
    <location>
        <begin position="1"/>
        <end position="388"/>
    </location>
</feature>
<feature type="domain" description="ATP-grasp" evidence="1">
    <location>
        <begin position="9"/>
        <end position="244"/>
    </location>
</feature>
<feature type="binding site" evidence="1">
    <location>
        <position position="46"/>
    </location>
    <ligand>
        <name>ATP</name>
        <dbReference type="ChEBI" id="CHEBI:30616"/>
    </ligand>
</feature>
<feature type="binding site" evidence="1">
    <location>
        <begin position="53"/>
        <end position="55"/>
    </location>
    <ligand>
        <name>ATP</name>
        <dbReference type="ChEBI" id="CHEBI:30616"/>
    </ligand>
</feature>
<feature type="binding site" evidence="1">
    <location>
        <position position="99"/>
    </location>
    <ligand>
        <name>ATP</name>
        <dbReference type="ChEBI" id="CHEBI:30616"/>
    </ligand>
</feature>
<feature type="binding site" evidence="1">
    <location>
        <position position="102"/>
    </location>
    <ligand>
        <name>ATP</name>
        <dbReference type="ChEBI" id="CHEBI:30616"/>
    </ligand>
</feature>
<feature type="binding site" evidence="1">
    <location>
        <position position="107"/>
    </location>
    <ligand>
        <name>ATP</name>
        <dbReference type="ChEBI" id="CHEBI:30616"/>
    </ligand>
</feature>
<feature type="binding site" evidence="1">
    <location>
        <position position="199"/>
    </location>
    <ligand>
        <name>Mg(2+)</name>
        <dbReference type="ChEBI" id="CHEBI:18420"/>
    </ligand>
</feature>
<feature type="binding site" evidence="1">
    <location>
        <position position="213"/>
    </location>
    <ligand>
        <name>Mg(2+)</name>
        <dbReference type="ChEBI" id="CHEBI:18420"/>
    </ligand>
</feature>
<feature type="binding site" evidence="1">
    <location>
        <position position="264"/>
    </location>
    <ligand>
        <name>substrate</name>
        <note>ligand shared with subunit alpha</note>
    </ligand>
</feature>
<feature type="binding site" evidence="1">
    <location>
        <begin position="321"/>
        <end position="323"/>
    </location>
    <ligand>
        <name>substrate</name>
        <note>ligand shared with subunit alpha</note>
    </ligand>
</feature>
<organism>
    <name type="scientific">Staphylococcus aureus (strain JH9)</name>
    <dbReference type="NCBI Taxonomy" id="359786"/>
    <lineage>
        <taxon>Bacteria</taxon>
        <taxon>Bacillati</taxon>
        <taxon>Bacillota</taxon>
        <taxon>Bacilli</taxon>
        <taxon>Bacillales</taxon>
        <taxon>Staphylococcaceae</taxon>
        <taxon>Staphylococcus</taxon>
    </lineage>
</organism>
<protein>
    <recommendedName>
        <fullName evidence="1">Succinate--CoA ligase [ADP-forming] subunit beta</fullName>
        <ecNumber evidence="1">6.2.1.5</ecNumber>
    </recommendedName>
    <alternativeName>
        <fullName evidence="1">Succinyl-CoA synthetase subunit beta</fullName>
        <shortName evidence="1">SCS-beta</shortName>
    </alternativeName>
</protein>